<dbReference type="EC" id="3.4.21.105" evidence="1"/>
<dbReference type="EMBL" id="CP000822">
    <property type="protein sequence ID" value="ABV15887.1"/>
    <property type="molecule type" value="Genomic_DNA"/>
</dbReference>
<dbReference type="RefSeq" id="WP_012135528.1">
    <property type="nucleotide sequence ID" value="NC_009792.1"/>
</dbReference>
<dbReference type="BMRB" id="A8AQX4"/>
<dbReference type="SMR" id="A8AQX4"/>
<dbReference type="STRING" id="290338.CKO_04842"/>
<dbReference type="MEROPS" id="S54.016"/>
<dbReference type="GeneID" id="45138341"/>
<dbReference type="KEGG" id="cko:CKO_04842"/>
<dbReference type="HOGENOM" id="CLU_058989_0_0_6"/>
<dbReference type="OrthoDB" id="9778341at2"/>
<dbReference type="Proteomes" id="UP000008148">
    <property type="component" value="Chromosome"/>
</dbReference>
<dbReference type="GO" id="GO:0005886">
    <property type="term" value="C:plasma membrane"/>
    <property type="evidence" value="ECO:0007669"/>
    <property type="project" value="UniProtKB-SubCell"/>
</dbReference>
<dbReference type="GO" id="GO:0004252">
    <property type="term" value="F:serine-type endopeptidase activity"/>
    <property type="evidence" value="ECO:0007669"/>
    <property type="project" value="UniProtKB-UniRule"/>
</dbReference>
<dbReference type="GO" id="GO:0006508">
    <property type="term" value="P:proteolysis"/>
    <property type="evidence" value="ECO:0007669"/>
    <property type="project" value="UniProtKB-UniRule"/>
</dbReference>
<dbReference type="FunFam" id="1.20.1540.10:FF:000003">
    <property type="entry name" value="Rhomboid protease GlpG"/>
    <property type="match status" value="1"/>
</dbReference>
<dbReference type="FunFam" id="3.30.70.2350:FF:000001">
    <property type="entry name" value="Rhomboid protease GlpG"/>
    <property type="match status" value="1"/>
</dbReference>
<dbReference type="Gene3D" id="3.30.70.2350">
    <property type="match status" value="1"/>
</dbReference>
<dbReference type="Gene3D" id="1.20.1540.10">
    <property type="entry name" value="Rhomboid-like"/>
    <property type="match status" value="1"/>
</dbReference>
<dbReference type="HAMAP" id="MF_01594">
    <property type="entry name" value="Rhomboid_GlpG"/>
    <property type="match status" value="1"/>
</dbReference>
<dbReference type="InterPro" id="IPR038236">
    <property type="entry name" value="GlpG_N_sf"/>
</dbReference>
<dbReference type="InterPro" id="IPR022732">
    <property type="entry name" value="Peptidase_S54_GlpG_N"/>
</dbReference>
<dbReference type="InterPro" id="IPR022764">
    <property type="entry name" value="Peptidase_S54_rhomboid_dom"/>
</dbReference>
<dbReference type="InterPro" id="IPR035952">
    <property type="entry name" value="Rhomboid-like_sf"/>
</dbReference>
<dbReference type="InterPro" id="IPR023662">
    <property type="entry name" value="Rhomboid_protease_GlpG"/>
</dbReference>
<dbReference type="NCBIfam" id="NF008155">
    <property type="entry name" value="PRK10907.1"/>
    <property type="match status" value="1"/>
</dbReference>
<dbReference type="NCBIfam" id="TIGR04239">
    <property type="entry name" value="rhombo_GlpG"/>
    <property type="match status" value="1"/>
</dbReference>
<dbReference type="PANTHER" id="PTHR43066:SF26">
    <property type="entry name" value="RHOMBOID PROTEASE GLPG"/>
    <property type="match status" value="1"/>
</dbReference>
<dbReference type="PANTHER" id="PTHR43066">
    <property type="entry name" value="RHOMBOID-RELATED PROTEIN"/>
    <property type="match status" value="1"/>
</dbReference>
<dbReference type="Pfam" id="PF01694">
    <property type="entry name" value="Rhomboid"/>
    <property type="match status" value="1"/>
</dbReference>
<dbReference type="Pfam" id="PF12122">
    <property type="entry name" value="Rhomboid_N"/>
    <property type="match status" value="1"/>
</dbReference>
<dbReference type="SUPFAM" id="SSF144091">
    <property type="entry name" value="Rhomboid-like"/>
    <property type="match status" value="1"/>
</dbReference>
<evidence type="ECO:0000255" key="1">
    <source>
        <dbReference type="HAMAP-Rule" id="MF_01594"/>
    </source>
</evidence>
<sequence>MLMITSFANPRVAQAFVDYMATQGVILTIQQHHQSDVWLADESQAERVRAELARFLENPADPRYLAASWQSGHTGSGLHYRRFPFIATLRERAGPVTWLIMIACILVFVVMSIVGAQSVMVWLAWPFDPSLKFEFWRYFTHAFMHFSLMHILFNLLWWWYIGGAVEKRLGSGKLIVITVISALLSGYVQQKFSGPWFGGLSGVVYALMGYAWLRGERDPQSGIYLQRGLIAFALIWIVAGWFDVFGMSMANGAHIAGLAVGLAMAFADTVNARKRT</sequence>
<protein>
    <recommendedName>
        <fullName evidence="1">Rhomboid protease GlpG</fullName>
        <ecNumber evidence="1">3.4.21.105</ecNumber>
    </recommendedName>
    <alternativeName>
        <fullName evidence="1">Intramembrane serine protease</fullName>
    </alternativeName>
</protein>
<keyword id="KW-0997">Cell inner membrane</keyword>
<keyword id="KW-1003">Cell membrane</keyword>
<keyword id="KW-0378">Hydrolase</keyword>
<keyword id="KW-0472">Membrane</keyword>
<keyword id="KW-0645">Protease</keyword>
<keyword id="KW-1185">Reference proteome</keyword>
<keyword id="KW-0720">Serine protease</keyword>
<keyword id="KW-0812">Transmembrane</keyword>
<keyword id="KW-1133">Transmembrane helix</keyword>
<accession>A8AQX4</accession>
<gene>
    <name evidence="1" type="primary">glpG</name>
    <name type="ordered locus">CKO_04842</name>
</gene>
<proteinExistence type="inferred from homology"/>
<comment type="function">
    <text evidence="1">Rhomboid-type serine protease that catalyzes intramembrane proteolysis.</text>
</comment>
<comment type="catalytic activity">
    <reaction evidence="1">
        <text>Cleaves type-1 transmembrane domains using a catalytic dyad composed of serine and histidine that are contributed by different transmembrane domains.</text>
        <dbReference type="EC" id="3.4.21.105"/>
    </reaction>
</comment>
<comment type="subcellular location">
    <subcellularLocation>
        <location evidence="1">Cell inner membrane</location>
        <topology evidence="1">Multi-pass membrane protein</topology>
    </subcellularLocation>
</comment>
<comment type="similarity">
    <text evidence="1">Belongs to the peptidase S54 family.</text>
</comment>
<organism>
    <name type="scientific">Citrobacter koseri (strain ATCC BAA-895 / CDC 4225-83 / SGSC4696)</name>
    <dbReference type="NCBI Taxonomy" id="290338"/>
    <lineage>
        <taxon>Bacteria</taxon>
        <taxon>Pseudomonadati</taxon>
        <taxon>Pseudomonadota</taxon>
        <taxon>Gammaproteobacteria</taxon>
        <taxon>Enterobacterales</taxon>
        <taxon>Enterobacteriaceae</taxon>
        <taxon>Citrobacter</taxon>
    </lineage>
</organism>
<feature type="chain" id="PRO_0000321675" description="Rhomboid protease GlpG">
    <location>
        <begin position="1"/>
        <end position="276"/>
    </location>
</feature>
<feature type="transmembrane region" description="Helical" evidence="1">
    <location>
        <begin position="96"/>
        <end position="116"/>
    </location>
</feature>
<feature type="transmembrane region" description="Helical" evidence="1">
    <location>
        <begin position="142"/>
        <end position="162"/>
    </location>
</feature>
<feature type="transmembrane region" description="Helical" evidence="1">
    <location>
        <begin position="169"/>
        <end position="189"/>
    </location>
</feature>
<feature type="transmembrane region" description="Helical" evidence="1">
    <location>
        <begin position="192"/>
        <end position="212"/>
    </location>
</feature>
<feature type="transmembrane region" description="Helical" evidence="1">
    <location>
        <begin position="229"/>
        <end position="249"/>
    </location>
</feature>
<feature type="transmembrane region" description="Helical" evidence="1">
    <location>
        <begin position="250"/>
        <end position="270"/>
    </location>
</feature>
<feature type="active site" description="Nucleophile" evidence="1">
    <location>
        <position position="201"/>
    </location>
</feature>
<feature type="active site" evidence="1">
    <location>
        <position position="254"/>
    </location>
</feature>
<reference key="1">
    <citation type="submission" date="2007-08" db="EMBL/GenBank/DDBJ databases">
        <authorList>
            <consortium name="The Citrobacter koseri Genome Sequencing Project"/>
            <person name="McClelland M."/>
            <person name="Sanderson E.K."/>
            <person name="Porwollik S."/>
            <person name="Spieth J."/>
            <person name="Clifton W.S."/>
            <person name="Latreille P."/>
            <person name="Courtney L."/>
            <person name="Wang C."/>
            <person name="Pepin K."/>
            <person name="Bhonagiri V."/>
            <person name="Nash W."/>
            <person name="Johnson M."/>
            <person name="Thiruvilangam P."/>
            <person name="Wilson R."/>
        </authorList>
    </citation>
    <scope>NUCLEOTIDE SEQUENCE [LARGE SCALE GENOMIC DNA]</scope>
    <source>
        <strain>ATCC BAA-895 / CDC 4225-83 / SGSC4696</strain>
    </source>
</reference>
<name>GLPG_CITK8</name>